<dbReference type="EC" id="3.5.99.6" evidence="1"/>
<dbReference type="EMBL" id="CP000730">
    <property type="protein sequence ID" value="ABX28589.1"/>
    <property type="molecule type" value="Genomic_DNA"/>
</dbReference>
<dbReference type="RefSeq" id="WP_000866415.1">
    <property type="nucleotide sequence ID" value="NC_010079.1"/>
</dbReference>
<dbReference type="SASBDB" id="A8YZR7"/>
<dbReference type="SMR" id="A8YZR7"/>
<dbReference type="KEGG" id="sax:USA300HOU_0563"/>
<dbReference type="HOGENOM" id="CLU_049611_1_1_9"/>
<dbReference type="BRENDA" id="3.5.99.6">
    <property type="organism ID" value="3352"/>
</dbReference>
<dbReference type="UniPathway" id="UPA00629">
    <property type="reaction ID" value="UER00684"/>
</dbReference>
<dbReference type="GO" id="GO:0005737">
    <property type="term" value="C:cytoplasm"/>
    <property type="evidence" value="ECO:0007669"/>
    <property type="project" value="TreeGrafter"/>
</dbReference>
<dbReference type="GO" id="GO:0004342">
    <property type="term" value="F:glucosamine-6-phosphate deaminase activity"/>
    <property type="evidence" value="ECO:0007669"/>
    <property type="project" value="UniProtKB-UniRule"/>
</dbReference>
<dbReference type="GO" id="GO:0042802">
    <property type="term" value="F:identical protein binding"/>
    <property type="evidence" value="ECO:0007669"/>
    <property type="project" value="TreeGrafter"/>
</dbReference>
<dbReference type="GO" id="GO:0005975">
    <property type="term" value="P:carbohydrate metabolic process"/>
    <property type="evidence" value="ECO:0007669"/>
    <property type="project" value="InterPro"/>
</dbReference>
<dbReference type="GO" id="GO:0006043">
    <property type="term" value="P:glucosamine catabolic process"/>
    <property type="evidence" value="ECO:0007669"/>
    <property type="project" value="TreeGrafter"/>
</dbReference>
<dbReference type="GO" id="GO:0006046">
    <property type="term" value="P:N-acetylglucosamine catabolic process"/>
    <property type="evidence" value="ECO:0007669"/>
    <property type="project" value="TreeGrafter"/>
</dbReference>
<dbReference type="GO" id="GO:0019262">
    <property type="term" value="P:N-acetylneuraminate catabolic process"/>
    <property type="evidence" value="ECO:0007669"/>
    <property type="project" value="UniProtKB-UniRule"/>
</dbReference>
<dbReference type="CDD" id="cd01399">
    <property type="entry name" value="GlcN6P_deaminase"/>
    <property type="match status" value="1"/>
</dbReference>
<dbReference type="FunFam" id="3.40.50.1360:FF:000003">
    <property type="entry name" value="Glucosamine-6-phosphate deaminase"/>
    <property type="match status" value="1"/>
</dbReference>
<dbReference type="Gene3D" id="3.40.50.1360">
    <property type="match status" value="1"/>
</dbReference>
<dbReference type="HAMAP" id="MF_01241">
    <property type="entry name" value="GlcN6P_deamin"/>
    <property type="match status" value="1"/>
</dbReference>
<dbReference type="InterPro" id="IPR006148">
    <property type="entry name" value="Glc/Gal-6P_isomerase"/>
</dbReference>
<dbReference type="InterPro" id="IPR004547">
    <property type="entry name" value="Glucosamine6P_isomerase"/>
</dbReference>
<dbReference type="InterPro" id="IPR018321">
    <property type="entry name" value="Glucosamine6P_isomerase_CS"/>
</dbReference>
<dbReference type="InterPro" id="IPR037171">
    <property type="entry name" value="NagB/RpiA_transferase-like"/>
</dbReference>
<dbReference type="NCBIfam" id="TIGR00502">
    <property type="entry name" value="nagB"/>
    <property type="match status" value="1"/>
</dbReference>
<dbReference type="PANTHER" id="PTHR11280">
    <property type="entry name" value="GLUCOSAMINE-6-PHOSPHATE ISOMERASE"/>
    <property type="match status" value="1"/>
</dbReference>
<dbReference type="PANTHER" id="PTHR11280:SF5">
    <property type="entry name" value="GLUCOSAMINE-6-PHOSPHATE ISOMERASE"/>
    <property type="match status" value="1"/>
</dbReference>
<dbReference type="Pfam" id="PF01182">
    <property type="entry name" value="Glucosamine_iso"/>
    <property type="match status" value="1"/>
</dbReference>
<dbReference type="SUPFAM" id="SSF100950">
    <property type="entry name" value="NagB/RpiA/CoA transferase-like"/>
    <property type="match status" value="1"/>
</dbReference>
<dbReference type="PROSITE" id="PS01161">
    <property type="entry name" value="GLC_GALNAC_ISOMERASE"/>
    <property type="match status" value="1"/>
</dbReference>
<feature type="chain" id="PRO_1000085758" description="Glucosamine-6-phosphate deaminase">
    <location>
        <begin position="1"/>
        <end position="252"/>
    </location>
</feature>
<feature type="active site" description="Proton acceptor; for enolization step" evidence="1">
    <location>
        <position position="67"/>
    </location>
</feature>
<feature type="active site" description="For ring-opening step" evidence="1">
    <location>
        <position position="137"/>
    </location>
</feature>
<feature type="active site" description="Proton acceptor; for ring-opening step" evidence="1">
    <location>
        <position position="139"/>
    </location>
</feature>
<feature type="active site" description="For ring-opening step" evidence="1">
    <location>
        <position position="144"/>
    </location>
</feature>
<comment type="function">
    <text evidence="1">Catalyzes the reversible isomerization-deamination of glucosamine 6-phosphate (GlcN6P) to form fructose 6-phosphate (Fru6P) and ammonium ion.</text>
</comment>
<comment type="catalytic activity">
    <reaction evidence="1">
        <text>alpha-D-glucosamine 6-phosphate + H2O = beta-D-fructose 6-phosphate + NH4(+)</text>
        <dbReference type="Rhea" id="RHEA:12172"/>
        <dbReference type="ChEBI" id="CHEBI:15377"/>
        <dbReference type="ChEBI" id="CHEBI:28938"/>
        <dbReference type="ChEBI" id="CHEBI:57634"/>
        <dbReference type="ChEBI" id="CHEBI:75989"/>
        <dbReference type="EC" id="3.5.99.6"/>
    </reaction>
</comment>
<comment type="pathway">
    <text evidence="1">Amino-sugar metabolism; N-acetylneuraminate degradation; D-fructose 6-phosphate from N-acetylneuraminate: step 5/5.</text>
</comment>
<comment type="similarity">
    <text evidence="1">Belongs to the glucosamine/galactosamine-6-phosphate isomerase family. NagB subfamily.</text>
</comment>
<proteinExistence type="inferred from homology"/>
<name>NAGB_STAAT</name>
<reference key="1">
    <citation type="journal article" date="2007" name="BMC Microbiol.">
        <title>Subtle genetic changes enhance virulence of methicillin resistant and sensitive Staphylococcus aureus.</title>
        <authorList>
            <person name="Highlander S.K."/>
            <person name="Hulten K.G."/>
            <person name="Qin X."/>
            <person name="Jiang H."/>
            <person name="Yerrapragada S."/>
            <person name="Mason E.O. Jr."/>
            <person name="Shang Y."/>
            <person name="Williams T.M."/>
            <person name="Fortunov R.M."/>
            <person name="Liu Y."/>
            <person name="Igboeli O."/>
            <person name="Petrosino J."/>
            <person name="Tirumalai M."/>
            <person name="Uzman A."/>
            <person name="Fox G.E."/>
            <person name="Cardenas A.M."/>
            <person name="Muzny D.M."/>
            <person name="Hemphill L."/>
            <person name="Ding Y."/>
            <person name="Dugan S."/>
            <person name="Blyth P.R."/>
            <person name="Buhay C.J."/>
            <person name="Dinh H.H."/>
            <person name="Hawes A.C."/>
            <person name="Holder M."/>
            <person name="Kovar C.L."/>
            <person name="Lee S.L."/>
            <person name="Liu W."/>
            <person name="Nazareth L.V."/>
            <person name="Wang Q."/>
            <person name="Zhou J."/>
            <person name="Kaplan S.L."/>
            <person name="Weinstock G.M."/>
        </authorList>
    </citation>
    <scope>NUCLEOTIDE SEQUENCE [LARGE SCALE GENOMIC DNA]</scope>
    <source>
        <strain>USA300 / TCH1516</strain>
    </source>
</reference>
<accession>A8YZR7</accession>
<sequence>MKVLNLGSKKQASFYVACELYKEMAFNQHCKLGLATGGTMTDLYEQLVKLLNKNQLNVDNVSTFNLDEYVGLTASHPQSYHYYMDDMLFKQYPYFNRKNIHIPNGDADDMNAEASKYNDVLEQQGQRDIQILGIGENGHIGFNEPGTPFDSVTHIVDLTESTIKANSRYFKNEDDVPKQAISMGLANILQAKRIILLAFGEKKRAAITHLLNQEISVDVPATLLHKHPNVEIYLDDEACPKNVAKIHVDEMD</sequence>
<keyword id="KW-0119">Carbohydrate metabolism</keyword>
<keyword id="KW-0378">Hydrolase</keyword>
<organism>
    <name type="scientific">Staphylococcus aureus (strain USA300 / TCH1516)</name>
    <dbReference type="NCBI Taxonomy" id="451516"/>
    <lineage>
        <taxon>Bacteria</taxon>
        <taxon>Bacillati</taxon>
        <taxon>Bacillota</taxon>
        <taxon>Bacilli</taxon>
        <taxon>Bacillales</taxon>
        <taxon>Staphylococcaceae</taxon>
        <taxon>Staphylococcus</taxon>
    </lineage>
</organism>
<evidence type="ECO:0000255" key="1">
    <source>
        <dbReference type="HAMAP-Rule" id="MF_01241"/>
    </source>
</evidence>
<gene>
    <name evidence="1" type="primary">nagB</name>
    <name type="ordered locus">USA300HOU_0563</name>
</gene>
<protein>
    <recommendedName>
        <fullName evidence="1">Glucosamine-6-phosphate deaminase</fullName>
        <ecNumber evidence="1">3.5.99.6</ecNumber>
    </recommendedName>
    <alternativeName>
        <fullName evidence="1">GlcN6P deaminase</fullName>
        <shortName evidence="1">GNPDA</shortName>
    </alternativeName>
    <alternativeName>
        <fullName evidence="1">Glucosamine-6-phosphate isomerase</fullName>
    </alternativeName>
</protein>